<protein>
    <recommendedName>
        <fullName evidence="1">Proline--tRNA ligase</fullName>
        <ecNumber evidence="1">6.1.1.15</ecNumber>
    </recommendedName>
    <alternativeName>
        <fullName evidence="1">Prolyl-tRNA synthetase</fullName>
        <shortName evidence="1">ProRS</shortName>
    </alternativeName>
</protein>
<name>SYP_BRUAB</name>
<dbReference type="EC" id="6.1.1.15" evidence="1"/>
<dbReference type="EMBL" id="AE017223">
    <property type="protein sequence ID" value="AAX74203.1"/>
    <property type="molecule type" value="Genomic_DNA"/>
</dbReference>
<dbReference type="RefSeq" id="WP_002968728.1">
    <property type="nucleotide sequence ID" value="NC_006932.1"/>
</dbReference>
<dbReference type="SMR" id="Q57DT1"/>
<dbReference type="EnsemblBacteria" id="AAX74203">
    <property type="protein sequence ID" value="AAX74203"/>
    <property type="gene ID" value="BruAb1_0836"/>
</dbReference>
<dbReference type="GeneID" id="93016793"/>
<dbReference type="KEGG" id="bmb:BruAb1_0836"/>
<dbReference type="HOGENOM" id="CLU_016739_4_2_5"/>
<dbReference type="Proteomes" id="UP000000540">
    <property type="component" value="Chromosome I"/>
</dbReference>
<dbReference type="GO" id="GO:0005829">
    <property type="term" value="C:cytosol"/>
    <property type="evidence" value="ECO:0007669"/>
    <property type="project" value="TreeGrafter"/>
</dbReference>
<dbReference type="GO" id="GO:0005524">
    <property type="term" value="F:ATP binding"/>
    <property type="evidence" value="ECO:0007669"/>
    <property type="project" value="UniProtKB-UniRule"/>
</dbReference>
<dbReference type="GO" id="GO:0004827">
    <property type="term" value="F:proline-tRNA ligase activity"/>
    <property type="evidence" value="ECO:0007669"/>
    <property type="project" value="UniProtKB-UniRule"/>
</dbReference>
<dbReference type="GO" id="GO:0006433">
    <property type="term" value="P:prolyl-tRNA aminoacylation"/>
    <property type="evidence" value="ECO:0007669"/>
    <property type="project" value="UniProtKB-UniRule"/>
</dbReference>
<dbReference type="CDD" id="cd00861">
    <property type="entry name" value="ProRS_anticodon_short"/>
    <property type="match status" value="1"/>
</dbReference>
<dbReference type="CDD" id="cd00779">
    <property type="entry name" value="ProRS_core_prok"/>
    <property type="match status" value="1"/>
</dbReference>
<dbReference type="FunFam" id="3.30.930.10:FF:000042">
    <property type="entry name" value="probable proline--tRNA ligase, mitochondrial"/>
    <property type="match status" value="1"/>
</dbReference>
<dbReference type="FunFam" id="3.40.50.800:FF:000032">
    <property type="entry name" value="Proline--tRNA ligase"/>
    <property type="match status" value="1"/>
</dbReference>
<dbReference type="Gene3D" id="3.40.50.800">
    <property type="entry name" value="Anticodon-binding domain"/>
    <property type="match status" value="1"/>
</dbReference>
<dbReference type="Gene3D" id="3.30.930.10">
    <property type="entry name" value="Bira Bifunctional Protein, Domain 2"/>
    <property type="match status" value="1"/>
</dbReference>
<dbReference type="HAMAP" id="MF_01570">
    <property type="entry name" value="Pro_tRNA_synth_type2"/>
    <property type="match status" value="1"/>
</dbReference>
<dbReference type="InterPro" id="IPR002314">
    <property type="entry name" value="aa-tRNA-synt_IIb"/>
</dbReference>
<dbReference type="InterPro" id="IPR006195">
    <property type="entry name" value="aa-tRNA-synth_II"/>
</dbReference>
<dbReference type="InterPro" id="IPR045864">
    <property type="entry name" value="aa-tRNA-synth_II/BPL/LPL"/>
</dbReference>
<dbReference type="InterPro" id="IPR004154">
    <property type="entry name" value="Anticodon-bd"/>
</dbReference>
<dbReference type="InterPro" id="IPR036621">
    <property type="entry name" value="Anticodon-bd_dom_sf"/>
</dbReference>
<dbReference type="InterPro" id="IPR002316">
    <property type="entry name" value="Pro-tRNA-ligase_IIa"/>
</dbReference>
<dbReference type="InterPro" id="IPR004500">
    <property type="entry name" value="Pro-tRNA-synth_IIa_bac-type"/>
</dbReference>
<dbReference type="InterPro" id="IPR050062">
    <property type="entry name" value="Pro-tRNA_synthetase"/>
</dbReference>
<dbReference type="InterPro" id="IPR023716">
    <property type="entry name" value="Prolyl-tRNA_ligase_IIa_type2"/>
</dbReference>
<dbReference type="InterPro" id="IPR044140">
    <property type="entry name" value="ProRS_anticodon_short"/>
</dbReference>
<dbReference type="InterPro" id="IPR033730">
    <property type="entry name" value="ProRS_core_prok"/>
</dbReference>
<dbReference type="NCBIfam" id="NF008979">
    <property type="entry name" value="PRK12325.1"/>
    <property type="match status" value="1"/>
</dbReference>
<dbReference type="NCBIfam" id="TIGR00409">
    <property type="entry name" value="proS_fam_II"/>
    <property type="match status" value="1"/>
</dbReference>
<dbReference type="PANTHER" id="PTHR42753">
    <property type="entry name" value="MITOCHONDRIAL RIBOSOME PROTEIN L39/PROLYL-TRNA LIGASE FAMILY MEMBER"/>
    <property type="match status" value="1"/>
</dbReference>
<dbReference type="PANTHER" id="PTHR42753:SF2">
    <property type="entry name" value="PROLINE--TRNA LIGASE"/>
    <property type="match status" value="1"/>
</dbReference>
<dbReference type="Pfam" id="PF03129">
    <property type="entry name" value="HGTP_anticodon"/>
    <property type="match status" value="1"/>
</dbReference>
<dbReference type="Pfam" id="PF00587">
    <property type="entry name" value="tRNA-synt_2b"/>
    <property type="match status" value="1"/>
</dbReference>
<dbReference type="PRINTS" id="PR01046">
    <property type="entry name" value="TRNASYNTHPRO"/>
</dbReference>
<dbReference type="SUPFAM" id="SSF52954">
    <property type="entry name" value="Class II aaRS ABD-related"/>
    <property type="match status" value="1"/>
</dbReference>
<dbReference type="SUPFAM" id="SSF55681">
    <property type="entry name" value="Class II aaRS and biotin synthetases"/>
    <property type="match status" value="1"/>
</dbReference>
<dbReference type="PROSITE" id="PS50862">
    <property type="entry name" value="AA_TRNA_LIGASE_II"/>
    <property type="match status" value="1"/>
</dbReference>
<gene>
    <name evidence="1" type="primary">proS</name>
    <name type="ordered locus">BruAb1_0836</name>
</gene>
<sequence>MRLSRYFLPILKENPKEAEIVSHRLMLRSGMIRQQSAGIYSWLPIGLKVLNKVCTIIREEQNRAGANEILMPTIQSADLWRESGRYDAYGKEMLRIQDRQKREMLFGPTNEEMVTDIFRSYVRSYKDLPLNLYHIQWKFRDEVRPRFGVMRSREFLMKDAYSFDLDYEGAKMAYYRMFVSYLRTFARVGLQAIPMRADTGPIGGDLSHEFIILAETGESQVYCDRAYLDLAVPGADTDFRNDAQLTDIVTRWTTPYAATDEMHDEADWAKVKPESQVSARGIEVGHIFHFGTKYSEPMGAKVQGPDGKEHLVSMGSYGIGPSRLVAAAIEASHDDAGIIWPKTIAPFGAGIVNMKPGDEGCDGVSEKLYEALTNAGVDPLLDDKDERPGAKFATMDLIGLPTQVIVGPRGVAAGEVEVKDRKTGERQSLGIKAAINMLTAQA</sequence>
<keyword id="KW-0030">Aminoacyl-tRNA synthetase</keyword>
<keyword id="KW-0067">ATP-binding</keyword>
<keyword id="KW-0963">Cytoplasm</keyword>
<keyword id="KW-0436">Ligase</keyword>
<keyword id="KW-0547">Nucleotide-binding</keyword>
<keyword id="KW-0648">Protein biosynthesis</keyword>
<accession>Q57DT1</accession>
<feature type="chain" id="PRO_0000248893" description="Proline--tRNA ligase">
    <location>
        <begin position="1"/>
        <end position="442"/>
    </location>
</feature>
<proteinExistence type="inferred from homology"/>
<reference key="1">
    <citation type="journal article" date="2005" name="J. Bacteriol.">
        <title>Completion of the genome sequence of Brucella abortus and comparison to the highly similar genomes of Brucella melitensis and Brucella suis.</title>
        <authorList>
            <person name="Halling S.M."/>
            <person name="Peterson-Burch B.D."/>
            <person name="Bricker B.J."/>
            <person name="Zuerner R.L."/>
            <person name="Qing Z."/>
            <person name="Li L.-L."/>
            <person name="Kapur V."/>
            <person name="Alt D.P."/>
            <person name="Olsen S.C."/>
        </authorList>
    </citation>
    <scope>NUCLEOTIDE SEQUENCE [LARGE SCALE GENOMIC DNA]</scope>
    <source>
        <strain>9-941</strain>
    </source>
</reference>
<evidence type="ECO:0000255" key="1">
    <source>
        <dbReference type="HAMAP-Rule" id="MF_01570"/>
    </source>
</evidence>
<organism>
    <name type="scientific">Brucella abortus biovar 1 (strain 9-941)</name>
    <dbReference type="NCBI Taxonomy" id="262698"/>
    <lineage>
        <taxon>Bacteria</taxon>
        <taxon>Pseudomonadati</taxon>
        <taxon>Pseudomonadota</taxon>
        <taxon>Alphaproteobacteria</taxon>
        <taxon>Hyphomicrobiales</taxon>
        <taxon>Brucellaceae</taxon>
        <taxon>Brucella/Ochrobactrum group</taxon>
        <taxon>Brucella</taxon>
    </lineage>
</organism>
<comment type="function">
    <text evidence="1">Catalyzes the attachment of proline to tRNA(Pro) in a two-step reaction: proline is first activated by ATP to form Pro-AMP and then transferred to the acceptor end of tRNA(Pro).</text>
</comment>
<comment type="catalytic activity">
    <reaction evidence="1">
        <text>tRNA(Pro) + L-proline + ATP = L-prolyl-tRNA(Pro) + AMP + diphosphate</text>
        <dbReference type="Rhea" id="RHEA:14305"/>
        <dbReference type="Rhea" id="RHEA-COMP:9700"/>
        <dbReference type="Rhea" id="RHEA-COMP:9702"/>
        <dbReference type="ChEBI" id="CHEBI:30616"/>
        <dbReference type="ChEBI" id="CHEBI:33019"/>
        <dbReference type="ChEBI" id="CHEBI:60039"/>
        <dbReference type="ChEBI" id="CHEBI:78442"/>
        <dbReference type="ChEBI" id="CHEBI:78532"/>
        <dbReference type="ChEBI" id="CHEBI:456215"/>
        <dbReference type="EC" id="6.1.1.15"/>
    </reaction>
</comment>
<comment type="subunit">
    <text evidence="1">Homodimer.</text>
</comment>
<comment type="subcellular location">
    <subcellularLocation>
        <location evidence="1">Cytoplasm</location>
    </subcellularLocation>
</comment>
<comment type="similarity">
    <text evidence="1">Belongs to the class-II aminoacyl-tRNA synthetase family. ProS type 2 subfamily.</text>
</comment>